<sequence length="46" mass="5410">MKRTFQPSVLKRNRSHGFRARMATKNGRQVLARRRAKGRTRLTVSK</sequence>
<feature type="chain" id="PRO_0000187434" description="Large ribosomal subunit protein bL34">
    <location>
        <begin position="1"/>
        <end position="46"/>
    </location>
</feature>
<reference key="1">
    <citation type="journal article" date="2003" name="Nat. Biotechnol.">
        <title>The genome sequence of the entomopathogenic bacterium Photorhabdus luminescens.</title>
        <authorList>
            <person name="Duchaud E."/>
            <person name="Rusniok C."/>
            <person name="Frangeul L."/>
            <person name="Buchrieser C."/>
            <person name="Givaudan A."/>
            <person name="Taourit S."/>
            <person name="Bocs S."/>
            <person name="Boursaux-Eude C."/>
            <person name="Chandler M."/>
            <person name="Charles J.-F."/>
            <person name="Dassa E."/>
            <person name="Derose R."/>
            <person name="Derzelle S."/>
            <person name="Freyssinet G."/>
            <person name="Gaudriault S."/>
            <person name="Medigue C."/>
            <person name="Lanois A."/>
            <person name="Powell K."/>
            <person name="Siguier P."/>
            <person name="Vincent R."/>
            <person name="Wingate V."/>
            <person name="Zouine M."/>
            <person name="Glaser P."/>
            <person name="Boemare N."/>
            <person name="Danchin A."/>
            <person name="Kunst F."/>
        </authorList>
    </citation>
    <scope>NUCLEOTIDE SEQUENCE [LARGE SCALE GENOMIC DNA]</scope>
    <source>
        <strain>DSM 15139 / CIP 105565 / TT01</strain>
    </source>
</reference>
<comment type="similarity">
    <text evidence="1">Belongs to the bacterial ribosomal protein bL34 family.</text>
</comment>
<accession>Q7MXZ2</accession>
<name>RL34_PHOLL</name>
<keyword id="KW-1185">Reference proteome</keyword>
<keyword id="KW-0687">Ribonucleoprotein</keyword>
<keyword id="KW-0689">Ribosomal protein</keyword>
<proteinExistence type="inferred from homology"/>
<organism>
    <name type="scientific">Photorhabdus laumondii subsp. laumondii (strain DSM 15139 / CIP 105565 / TT01)</name>
    <name type="common">Photorhabdus luminescens subsp. laumondii</name>
    <dbReference type="NCBI Taxonomy" id="243265"/>
    <lineage>
        <taxon>Bacteria</taxon>
        <taxon>Pseudomonadati</taxon>
        <taxon>Pseudomonadota</taxon>
        <taxon>Gammaproteobacteria</taxon>
        <taxon>Enterobacterales</taxon>
        <taxon>Morganellaceae</taxon>
        <taxon>Photorhabdus</taxon>
    </lineage>
</organism>
<dbReference type="EMBL" id="BX571875">
    <property type="protein sequence ID" value="CAE17281.1"/>
    <property type="molecule type" value="Genomic_DNA"/>
</dbReference>
<dbReference type="RefSeq" id="WP_004093983.1">
    <property type="nucleotide sequence ID" value="NC_005126.1"/>
</dbReference>
<dbReference type="SMR" id="Q7MXZ2"/>
<dbReference type="STRING" id="243265.plu4909"/>
<dbReference type="GeneID" id="69640727"/>
<dbReference type="KEGG" id="plu:plu4909"/>
<dbReference type="eggNOG" id="COG0230">
    <property type="taxonomic scope" value="Bacteria"/>
</dbReference>
<dbReference type="HOGENOM" id="CLU_129938_2_1_6"/>
<dbReference type="OrthoDB" id="9804164at2"/>
<dbReference type="Proteomes" id="UP000002514">
    <property type="component" value="Chromosome"/>
</dbReference>
<dbReference type="GO" id="GO:1990904">
    <property type="term" value="C:ribonucleoprotein complex"/>
    <property type="evidence" value="ECO:0007669"/>
    <property type="project" value="UniProtKB-KW"/>
</dbReference>
<dbReference type="GO" id="GO:0005840">
    <property type="term" value="C:ribosome"/>
    <property type="evidence" value="ECO:0007669"/>
    <property type="project" value="UniProtKB-KW"/>
</dbReference>
<dbReference type="GO" id="GO:0003735">
    <property type="term" value="F:structural constituent of ribosome"/>
    <property type="evidence" value="ECO:0007669"/>
    <property type="project" value="InterPro"/>
</dbReference>
<dbReference type="GO" id="GO:0006412">
    <property type="term" value="P:translation"/>
    <property type="evidence" value="ECO:0007669"/>
    <property type="project" value="UniProtKB-UniRule"/>
</dbReference>
<dbReference type="FunFam" id="1.10.287.3980:FF:000001">
    <property type="entry name" value="Mitochondrial ribosomal protein L34"/>
    <property type="match status" value="1"/>
</dbReference>
<dbReference type="Gene3D" id="1.10.287.3980">
    <property type="match status" value="1"/>
</dbReference>
<dbReference type="HAMAP" id="MF_00391">
    <property type="entry name" value="Ribosomal_bL34"/>
    <property type="match status" value="1"/>
</dbReference>
<dbReference type="InterPro" id="IPR000271">
    <property type="entry name" value="Ribosomal_bL34"/>
</dbReference>
<dbReference type="InterPro" id="IPR020939">
    <property type="entry name" value="Ribosomal_bL34_CS"/>
</dbReference>
<dbReference type="NCBIfam" id="TIGR01030">
    <property type="entry name" value="rpmH_bact"/>
    <property type="match status" value="1"/>
</dbReference>
<dbReference type="PANTHER" id="PTHR14503:SF4">
    <property type="entry name" value="LARGE RIBOSOMAL SUBUNIT PROTEIN BL34M"/>
    <property type="match status" value="1"/>
</dbReference>
<dbReference type="PANTHER" id="PTHR14503">
    <property type="entry name" value="MITOCHONDRIAL RIBOSOMAL PROTEIN 34 FAMILY MEMBER"/>
    <property type="match status" value="1"/>
</dbReference>
<dbReference type="Pfam" id="PF00468">
    <property type="entry name" value="Ribosomal_L34"/>
    <property type="match status" value="1"/>
</dbReference>
<dbReference type="PROSITE" id="PS00784">
    <property type="entry name" value="RIBOSOMAL_L34"/>
    <property type="match status" value="1"/>
</dbReference>
<evidence type="ECO:0000255" key="1">
    <source>
        <dbReference type="HAMAP-Rule" id="MF_00391"/>
    </source>
</evidence>
<evidence type="ECO:0000305" key="2"/>
<gene>
    <name evidence="1" type="primary">rpmH</name>
    <name type="ordered locus">plu4909</name>
</gene>
<protein>
    <recommendedName>
        <fullName evidence="1">Large ribosomal subunit protein bL34</fullName>
    </recommendedName>
    <alternativeName>
        <fullName evidence="2">50S ribosomal protein L34</fullName>
    </alternativeName>
</protein>